<feature type="chain" id="PRO_1000122965" description="Bifunctional purine biosynthesis protein PurH">
    <location>
        <begin position="1"/>
        <end position="523"/>
    </location>
</feature>
<feature type="domain" description="MGS-like" evidence="2">
    <location>
        <begin position="1"/>
        <end position="152"/>
    </location>
</feature>
<protein>
    <recommendedName>
        <fullName evidence="1">Bifunctional purine biosynthesis protein PurH</fullName>
    </recommendedName>
    <domain>
        <recommendedName>
            <fullName evidence="1">Phosphoribosylaminoimidazolecarboxamide formyltransferase</fullName>
            <ecNumber evidence="1">2.1.2.3</ecNumber>
        </recommendedName>
        <alternativeName>
            <fullName evidence="1">AICAR transformylase</fullName>
        </alternativeName>
    </domain>
    <domain>
        <recommendedName>
            <fullName evidence="1">IMP cyclohydrolase</fullName>
            <ecNumber evidence="1">3.5.4.10</ecNumber>
        </recommendedName>
        <alternativeName>
            <fullName evidence="1">ATIC</fullName>
        </alternativeName>
        <alternativeName>
            <fullName evidence="1">IMP synthase</fullName>
        </alternativeName>
        <alternativeName>
            <fullName evidence="1">Inosinicase</fullName>
        </alternativeName>
    </domain>
</protein>
<gene>
    <name evidence="1" type="primary">purH</name>
    <name type="ordered locus">JTY_0981</name>
</gene>
<proteinExistence type="inferred from homology"/>
<keyword id="KW-0378">Hydrolase</keyword>
<keyword id="KW-0511">Multifunctional enzyme</keyword>
<keyword id="KW-0658">Purine biosynthesis</keyword>
<keyword id="KW-0808">Transferase</keyword>
<comment type="catalytic activity">
    <reaction evidence="1">
        <text>(6R)-10-formyltetrahydrofolate + 5-amino-1-(5-phospho-beta-D-ribosyl)imidazole-4-carboxamide = 5-formamido-1-(5-phospho-D-ribosyl)imidazole-4-carboxamide + (6S)-5,6,7,8-tetrahydrofolate</text>
        <dbReference type="Rhea" id="RHEA:22192"/>
        <dbReference type="ChEBI" id="CHEBI:57453"/>
        <dbReference type="ChEBI" id="CHEBI:58467"/>
        <dbReference type="ChEBI" id="CHEBI:58475"/>
        <dbReference type="ChEBI" id="CHEBI:195366"/>
        <dbReference type="EC" id="2.1.2.3"/>
    </reaction>
</comment>
<comment type="catalytic activity">
    <reaction evidence="1">
        <text>IMP + H2O = 5-formamido-1-(5-phospho-D-ribosyl)imidazole-4-carboxamide</text>
        <dbReference type="Rhea" id="RHEA:18445"/>
        <dbReference type="ChEBI" id="CHEBI:15377"/>
        <dbReference type="ChEBI" id="CHEBI:58053"/>
        <dbReference type="ChEBI" id="CHEBI:58467"/>
        <dbReference type="EC" id="3.5.4.10"/>
    </reaction>
</comment>
<comment type="pathway">
    <text evidence="1">Purine metabolism; IMP biosynthesis via de novo pathway; 5-formamido-1-(5-phospho-D-ribosyl)imidazole-4-carboxamide from 5-amino-1-(5-phospho-D-ribosyl)imidazole-4-carboxamide (10-formyl THF route): step 1/1.</text>
</comment>
<comment type="pathway">
    <text evidence="1">Purine metabolism; IMP biosynthesis via de novo pathway; IMP from 5-formamido-1-(5-phospho-D-ribosyl)imidazole-4-carboxamide: step 1/1.</text>
</comment>
<comment type="domain">
    <text evidence="1">The IMP cyclohydrolase activity resides in the N-terminal region.</text>
</comment>
<comment type="similarity">
    <text evidence="1">Belongs to the PurH family.</text>
</comment>
<name>PUR9_MYCBT</name>
<dbReference type="EC" id="2.1.2.3" evidence="1"/>
<dbReference type="EC" id="3.5.4.10" evidence="1"/>
<dbReference type="EMBL" id="AP010918">
    <property type="protein sequence ID" value="BAH25272.1"/>
    <property type="molecule type" value="Genomic_DNA"/>
</dbReference>
<dbReference type="RefSeq" id="WP_003404890.1">
    <property type="nucleotide sequence ID" value="NZ_CP014566.1"/>
</dbReference>
<dbReference type="SMR" id="C1ALU3"/>
<dbReference type="KEGG" id="mbt:JTY_0981"/>
<dbReference type="HOGENOM" id="CLU_016316_5_2_11"/>
<dbReference type="UniPathway" id="UPA00074">
    <property type="reaction ID" value="UER00133"/>
</dbReference>
<dbReference type="UniPathway" id="UPA00074">
    <property type="reaction ID" value="UER00135"/>
</dbReference>
<dbReference type="GO" id="GO:0005829">
    <property type="term" value="C:cytosol"/>
    <property type="evidence" value="ECO:0007669"/>
    <property type="project" value="TreeGrafter"/>
</dbReference>
<dbReference type="GO" id="GO:0003937">
    <property type="term" value="F:IMP cyclohydrolase activity"/>
    <property type="evidence" value="ECO:0007669"/>
    <property type="project" value="UniProtKB-UniRule"/>
</dbReference>
<dbReference type="GO" id="GO:0004643">
    <property type="term" value="F:phosphoribosylaminoimidazolecarboxamide formyltransferase activity"/>
    <property type="evidence" value="ECO:0007669"/>
    <property type="project" value="UniProtKB-UniRule"/>
</dbReference>
<dbReference type="GO" id="GO:0006189">
    <property type="term" value="P:'de novo' IMP biosynthetic process"/>
    <property type="evidence" value="ECO:0007669"/>
    <property type="project" value="UniProtKB-UniRule"/>
</dbReference>
<dbReference type="CDD" id="cd01421">
    <property type="entry name" value="IMPCH"/>
    <property type="match status" value="1"/>
</dbReference>
<dbReference type="FunFam" id="3.40.140.20:FF:000001">
    <property type="entry name" value="Bifunctional purine biosynthesis protein PurH"/>
    <property type="match status" value="1"/>
</dbReference>
<dbReference type="FunFam" id="3.40.50.1380:FF:000001">
    <property type="entry name" value="Bifunctional purine biosynthesis protein PurH"/>
    <property type="match status" value="1"/>
</dbReference>
<dbReference type="Gene3D" id="3.40.140.20">
    <property type="match status" value="2"/>
</dbReference>
<dbReference type="Gene3D" id="3.40.50.1380">
    <property type="entry name" value="Methylglyoxal synthase-like domain"/>
    <property type="match status" value="1"/>
</dbReference>
<dbReference type="HAMAP" id="MF_00139">
    <property type="entry name" value="PurH"/>
    <property type="match status" value="1"/>
</dbReference>
<dbReference type="InterPro" id="IPR024051">
    <property type="entry name" value="AICAR_Tfase_dup_dom_sf"/>
</dbReference>
<dbReference type="InterPro" id="IPR016193">
    <property type="entry name" value="Cytidine_deaminase-like"/>
</dbReference>
<dbReference type="InterPro" id="IPR011607">
    <property type="entry name" value="MGS-like_dom"/>
</dbReference>
<dbReference type="InterPro" id="IPR036914">
    <property type="entry name" value="MGS-like_dom_sf"/>
</dbReference>
<dbReference type="InterPro" id="IPR002695">
    <property type="entry name" value="PurH-like"/>
</dbReference>
<dbReference type="NCBIfam" id="NF002049">
    <property type="entry name" value="PRK00881.1"/>
    <property type="match status" value="1"/>
</dbReference>
<dbReference type="NCBIfam" id="TIGR00355">
    <property type="entry name" value="purH"/>
    <property type="match status" value="1"/>
</dbReference>
<dbReference type="PANTHER" id="PTHR11692:SF0">
    <property type="entry name" value="BIFUNCTIONAL PURINE BIOSYNTHESIS PROTEIN ATIC"/>
    <property type="match status" value="1"/>
</dbReference>
<dbReference type="PANTHER" id="PTHR11692">
    <property type="entry name" value="BIFUNCTIONAL PURINE BIOSYNTHESIS PROTEIN PURH"/>
    <property type="match status" value="1"/>
</dbReference>
<dbReference type="Pfam" id="PF01808">
    <property type="entry name" value="AICARFT_IMPCHas"/>
    <property type="match status" value="1"/>
</dbReference>
<dbReference type="Pfam" id="PF02142">
    <property type="entry name" value="MGS"/>
    <property type="match status" value="1"/>
</dbReference>
<dbReference type="PIRSF" id="PIRSF000414">
    <property type="entry name" value="AICARFT_IMPCHas"/>
    <property type="match status" value="1"/>
</dbReference>
<dbReference type="SMART" id="SM00798">
    <property type="entry name" value="AICARFT_IMPCHas"/>
    <property type="match status" value="1"/>
</dbReference>
<dbReference type="SMART" id="SM00851">
    <property type="entry name" value="MGS"/>
    <property type="match status" value="1"/>
</dbReference>
<dbReference type="SUPFAM" id="SSF53927">
    <property type="entry name" value="Cytidine deaminase-like"/>
    <property type="match status" value="1"/>
</dbReference>
<dbReference type="SUPFAM" id="SSF52335">
    <property type="entry name" value="Methylglyoxal synthase-like"/>
    <property type="match status" value="1"/>
</dbReference>
<dbReference type="PROSITE" id="PS51855">
    <property type="entry name" value="MGS"/>
    <property type="match status" value="1"/>
</dbReference>
<accession>C1ALU3</accession>
<sequence>MSTDDGRRPIRRALISVYDKTGLVDLAQGLSAAGVEIISTGSTAKTIADTGIPVTPVEQLTGFPEVLDGRVKTLHPRVHAGLLADLRKSEHAAALEQLGIEAFELVVVNLYPFSQTVESGASVDDCVEQIDIGGPAMVRAAAKNHPSAAVVTDPLGYHGVLAALRAGGFTLAERKRLASLAFQHIAEYDIAVASWMQQTLAPEHPVAAFPQWFGRSWRRVAMLRYGENPHQQAALYGDPTAWPGLAQAEQLHGKDMSYNNFTDADAAWRAAFDHEQTCVAIIKHANPCGIAISSVSVADAHRKAHECDPLSAYGGVIAANTEVSVEMAEYVSTIFTEVIVAPGYAPGALDVLARKKNIRVLVAAEPLAGGSELRPISGGLLIQQSDQLDAHGDNPANWTLATGSPADPATLTDLVFAWRACRAVKSNAIVIAADGATVGVGMGQVNRVDAARLAVERGGERVRGAVAASDAFFPFPDGLETLAAAGVTAVVHPGGSVRDEEVTEAAAKAGVTLYLTGARHFAH</sequence>
<reference key="1">
    <citation type="journal article" date="2009" name="Vaccine">
        <title>Whole genome sequence analysis of Mycobacterium bovis bacillus Calmette-Guerin (BCG) Tokyo 172: a comparative study of BCG vaccine substrains.</title>
        <authorList>
            <person name="Seki M."/>
            <person name="Honda I."/>
            <person name="Fujita I."/>
            <person name="Yano I."/>
            <person name="Yamamoto S."/>
            <person name="Koyama A."/>
        </authorList>
    </citation>
    <scope>NUCLEOTIDE SEQUENCE [LARGE SCALE GENOMIC DNA]</scope>
    <source>
        <strain>BCG / Tokyo 172 / ATCC 35737 / TMC 1019</strain>
    </source>
</reference>
<evidence type="ECO:0000255" key="1">
    <source>
        <dbReference type="HAMAP-Rule" id="MF_00139"/>
    </source>
</evidence>
<evidence type="ECO:0000255" key="2">
    <source>
        <dbReference type="PROSITE-ProRule" id="PRU01202"/>
    </source>
</evidence>
<organism>
    <name type="scientific">Mycobacterium bovis (strain BCG / Tokyo 172 / ATCC 35737 / TMC 1019)</name>
    <dbReference type="NCBI Taxonomy" id="561275"/>
    <lineage>
        <taxon>Bacteria</taxon>
        <taxon>Bacillati</taxon>
        <taxon>Actinomycetota</taxon>
        <taxon>Actinomycetes</taxon>
        <taxon>Mycobacteriales</taxon>
        <taxon>Mycobacteriaceae</taxon>
        <taxon>Mycobacterium</taxon>
        <taxon>Mycobacterium tuberculosis complex</taxon>
    </lineage>
</organism>